<accession>Q9HN46</accession>
<comment type="function">
    <text evidence="1">Catalyzes the formation of archaetidylethanolamine (PtdEtn) from archaetidylserine (PtdSer).</text>
</comment>
<comment type="catalytic activity">
    <reaction evidence="1">
        <text>archaetidylserine + H(+) = archaetidylethanolamine + CO2</text>
        <dbReference type="Rhea" id="RHEA:51488"/>
        <dbReference type="ChEBI" id="CHEBI:15378"/>
        <dbReference type="ChEBI" id="CHEBI:16526"/>
        <dbReference type="ChEBI" id="CHEBI:71517"/>
        <dbReference type="ChEBI" id="CHEBI:134176"/>
    </reaction>
</comment>
<comment type="cofactor">
    <cofactor evidence="1">
        <name>pyruvate</name>
        <dbReference type="ChEBI" id="CHEBI:15361"/>
    </cofactor>
    <text evidence="1">Binds 1 pyruvoyl group covalently per subunit.</text>
</comment>
<comment type="subunit">
    <text evidence="1">Heterodimer of a large membrane-associated beta subunit and a small pyruvoyl-containing alpha subunit.</text>
</comment>
<comment type="subcellular location">
    <subcellularLocation>
        <location evidence="1">Cell membrane</location>
        <topology evidence="1">Peripheral membrane protein</topology>
    </subcellularLocation>
</comment>
<comment type="PTM">
    <text evidence="1">Is synthesized initially as an inactive proenzyme. Formation of the active enzyme involves a self-maturation process in which the active site pyruvoyl group is generated from an internal serine residue via an autocatalytic post-translational modification. Two non-identical subunits are generated from the proenzyme in this reaction, and the pyruvate is formed at the N-terminus of the alpha chain, which is derived from the carboxyl end of the proenzyme. The post-translation cleavage follows an unusual pathway, termed non-hydrolytic serinolysis, in which the side chain hydroxyl group of the serine supplies its oxygen atom to form the C-terminus of the beta chain, while the remainder of the serine residue undergoes an oxidative deamination to produce ammonia and the pyruvoyl prosthetic group on the alpha chain.</text>
</comment>
<comment type="similarity">
    <text evidence="1">Belongs to the phosphatidylserine decarboxylase family. PSD-A subfamily.</text>
</comment>
<comment type="sequence caution" evidence="2">
    <conflict type="erroneous initiation">
        <sequence resource="EMBL-CDS" id="AAG20375"/>
    </conflict>
    <text>Extended N-terminus.</text>
</comment>
<name>ASD_HALSA</name>
<protein>
    <recommendedName>
        <fullName evidence="1">Putative archaetidylserine decarboxylase proenzyme</fullName>
        <ecNumber evidence="1">4.1.1.-</ecNumber>
    </recommendedName>
    <component>
        <recommendedName>
            <fullName evidence="1">Archaetidylserine decarboxylase alpha chain</fullName>
        </recommendedName>
    </component>
    <component>
        <recommendedName>
            <fullName evidence="1">Archaetidylserine decarboxylase beta chain</fullName>
        </recommendedName>
    </component>
</protein>
<dbReference type="EC" id="4.1.1.-" evidence="1"/>
<dbReference type="EMBL" id="AE004437">
    <property type="protein sequence ID" value="AAG20375.1"/>
    <property type="status" value="ALT_INIT"/>
    <property type="molecule type" value="Genomic_DNA"/>
</dbReference>
<dbReference type="PIR" id="C84376">
    <property type="entry name" value="C84376"/>
</dbReference>
<dbReference type="RefSeq" id="WP_012289470.1">
    <property type="nucleotide sequence ID" value="NC_002607.1"/>
</dbReference>
<dbReference type="SMR" id="Q9HN46"/>
<dbReference type="STRING" id="64091.VNG_2255C"/>
<dbReference type="PaxDb" id="64091-VNG_2255C"/>
<dbReference type="KEGG" id="hal:VNG_2255C"/>
<dbReference type="PATRIC" id="fig|64091.14.peg.1735"/>
<dbReference type="HOGENOM" id="CLU_072492_1_0_2"/>
<dbReference type="InParanoid" id="Q9HN46"/>
<dbReference type="OrthoDB" id="50255at2157"/>
<dbReference type="PhylomeDB" id="Q9HN46"/>
<dbReference type="Proteomes" id="UP000000554">
    <property type="component" value="Chromosome"/>
</dbReference>
<dbReference type="GO" id="GO:0005886">
    <property type="term" value="C:plasma membrane"/>
    <property type="evidence" value="ECO:0007669"/>
    <property type="project" value="UniProtKB-SubCell"/>
</dbReference>
<dbReference type="GO" id="GO:0004609">
    <property type="term" value="F:phosphatidylserine decarboxylase activity"/>
    <property type="evidence" value="ECO:0007669"/>
    <property type="project" value="InterPro"/>
</dbReference>
<dbReference type="GO" id="GO:0008654">
    <property type="term" value="P:phospholipid biosynthetic process"/>
    <property type="evidence" value="ECO:0007669"/>
    <property type="project" value="UniProtKB-UniRule"/>
</dbReference>
<dbReference type="HAMAP" id="MF_00664">
    <property type="entry name" value="PS_decarb_PSD_A"/>
    <property type="match status" value="1"/>
</dbReference>
<dbReference type="InterPro" id="IPR003817">
    <property type="entry name" value="PS_Dcarbxylase"/>
</dbReference>
<dbReference type="InterPro" id="IPR033175">
    <property type="entry name" value="PSD-A"/>
</dbReference>
<dbReference type="NCBIfam" id="NF038088">
    <property type="entry name" value="anchor_synt_D"/>
    <property type="match status" value="1"/>
</dbReference>
<dbReference type="NCBIfam" id="NF003683">
    <property type="entry name" value="PRK05305.2-3"/>
    <property type="match status" value="1"/>
</dbReference>
<dbReference type="PANTHER" id="PTHR35809">
    <property type="entry name" value="ARCHAETIDYLSERINE DECARBOXYLASE PROENZYME-RELATED"/>
    <property type="match status" value="1"/>
</dbReference>
<dbReference type="PANTHER" id="PTHR35809:SF1">
    <property type="entry name" value="ARCHAETIDYLSERINE DECARBOXYLASE PROENZYME-RELATED"/>
    <property type="match status" value="1"/>
</dbReference>
<dbReference type="Pfam" id="PF02666">
    <property type="entry name" value="PS_Dcarbxylase"/>
    <property type="match status" value="1"/>
</dbReference>
<sequence length="196" mass="21015">MLARGPWTWKYALPPAVVGVAALAASSPWGVVGVALAAFVVWFHRDPDRSPNGAGVVVPADGTVSVIRTRDDGRVRVGVFMNVHNVHVNRVPVAGRVESVVHEPGGHRPAFSKESAHNERVRIETAEWTVVLIAGAFARRIHPYVEAGEDLARGDRLGHISFGSRADVVLPPAYDRGDVVVESGQTVRAGETVLAR</sequence>
<feature type="chain" id="PRO_0000029821" description="Archaetidylserine decarboxylase beta chain" evidence="1">
    <location>
        <begin position="1"/>
        <end position="163"/>
    </location>
</feature>
<feature type="chain" id="PRO_0000029822" description="Archaetidylserine decarboxylase alpha chain" evidence="1">
    <location>
        <begin position="164"/>
        <end position="196"/>
    </location>
</feature>
<feature type="active site" description="Schiff-base intermediate with substrate; via pyruvic acid" evidence="1">
    <location>
        <position position="164"/>
    </location>
</feature>
<feature type="site" description="Cleavage (non-hydrolytic); by autocatalysis" evidence="1">
    <location>
        <begin position="163"/>
        <end position="164"/>
    </location>
</feature>
<feature type="modified residue" description="Pyruvic acid (Ser); by autocatalysis" evidence="1">
    <location>
        <position position="164"/>
    </location>
</feature>
<proteinExistence type="inferred from homology"/>
<evidence type="ECO:0000255" key="1">
    <source>
        <dbReference type="HAMAP-Rule" id="MF_00664"/>
    </source>
</evidence>
<evidence type="ECO:0000305" key="2"/>
<keyword id="KW-1003">Cell membrane</keyword>
<keyword id="KW-0210">Decarboxylase</keyword>
<keyword id="KW-0444">Lipid biosynthesis</keyword>
<keyword id="KW-0443">Lipid metabolism</keyword>
<keyword id="KW-0456">Lyase</keyword>
<keyword id="KW-0472">Membrane</keyword>
<keyword id="KW-0594">Phospholipid biosynthesis</keyword>
<keyword id="KW-1208">Phospholipid metabolism</keyword>
<keyword id="KW-0670">Pyruvate</keyword>
<keyword id="KW-1185">Reference proteome</keyword>
<keyword id="KW-0865">Zymogen</keyword>
<reference key="1">
    <citation type="journal article" date="2000" name="Proc. Natl. Acad. Sci. U.S.A.">
        <title>Genome sequence of Halobacterium species NRC-1.</title>
        <authorList>
            <person name="Ng W.V."/>
            <person name="Kennedy S.P."/>
            <person name="Mahairas G.G."/>
            <person name="Berquist B."/>
            <person name="Pan M."/>
            <person name="Shukla H.D."/>
            <person name="Lasky S.R."/>
            <person name="Baliga N.S."/>
            <person name="Thorsson V."/>
            <person name="Sbrogna J."/>
            <person name="Swartzell S."/>
            <person name="Weir D."/>
            <person name="Hall J."/>
            <person name="Dahl T.A."/>
            <person name="Welti R."/>
            <person name="Goo Y.A."/>
            <person name="Leithauser B."/>
            <person name="Keller K."/>
            <person name="Cruz R."/>
            <person name="Danson M.J."/>
            <person name="Hough D.W."/>
            <person name="Maddocks D.G."/>
            <person name="Jablonski P.E."/>
            <person name="Krebs M.P."/>
            <person name="Angevine C.M."/>
            <person name="Dale H."/>
            <person name="Isenbarger T.A."/>
            <person name="Peck R.F."/>
            <person name="Pohlschroder M."/>
            <person name="Spudich J.L."/>
            <person name="Jung K.-H."/>
            <person name="Alam M."/>
            <person name="Freitas T."/>
            <person name="Hou S."/>
            <person name="Daniels C.J."/>
            <person name="Dennis P.P."/>
            <person name="Omer A.D."/>
            <person name="Ebhardt H."/>
            <person name="Lowe T.M."/>
            <person name="Liang P."/>
            <person name="Riley M."/>
            <person name="Hood L."/>
            <person name="DasSarma S."/>
        </authorList>
    </citation>
    <scope>NUCLEOTIDE SEQUENCE [LARGE SCALE GENOMIC DNA]</scope>
    <source>
        <strain>ATCC 700922 / JCM 11081 / NRC-1</strain>
    </source>
</reference>
<organism>
    <name type="scientific">Halobacterium salinarum (strain ATCC 700922 / JCM 11081 / NRC-1)</name>
    <name type="common">Halobacterium halobium</name>
    <dbReference type="NCBI Taxonomy" id="64091"/>
    <lineage>
        <taxon>Archaea</taxon>
        <taxon>Methanobacteriati</taxon>
        <taxon>Methanobacteriota</taxon>
        <taxon>Stenosarchaea group</taxon>
        <taxon>Halobacteria</taxon>
        <taxon>Halobacteriales</taxon>
        <taxon>Halobacteriaceae</taxon>
        <taxon>Halobacterium</taxon>
        <taxon>Halobacterium salinarum NRC-34001</taxon>
    </lineage>
</organism>
<gene>
    <name evidence="1" type="primary">asd</name>
    <name type="ordered locus">VNG_2255C</name>
</gene>